<gene>
    <name evidence="1" type="primary">alaS</name>
    <name type="ordered locus">Bsph_3873</name>
</gene>
<accession>B1HUK4</accession>
<evidence type="ECO:0000255" key="1">
    <source>
        <dbReference type="HAMAP-Rule" id="MF_00036"/>
    </source>
</evidence>
<evidence type="ECO:0000305" key="2"/>
<dbReference type="EC" id="6.1.1.7" evidence="1"/>
<dbReference type="EMBL" id="CP000817">
    <property type="protein sequence ID" value="ACA41349.1"/>
    <property type="status" value="ALT_FRAME"/>
    <property type="molecule type" value="Genomic_DNA"/>
</dbReference>
<dbReference type="SMR" id="B1HUK4"/>
<dbReference type="EnsemblBacteria" id="ACA41349">
    <property type="protein sequence ID" value="ACA41349"/>
    <property type="gene ID" value="Bsph_3873"/>
</dbReference>
<dbReference type="KEGG" id="lsp:Bsph_3873"/>
<dbReference type="HOGENOM" id="CLU_004485_1_1_9"/>
<dbReference type="Proteomes" id="UP000002164">
    <property type="component" value="Chromosome"/>
</dbReference>
<dbReference type="GO" id="GO:0005829">
    <property type="term" value="C:cytosol"/>
    <property type="evidence" value="ECO:0007669"/>
    <property type="project" value="TreeGrafter"/>
</dbReference>
<dbReference type="GO" id="GO:0004813">
    <property type="term" value="F:alanine-tRNA ligase activity"/>
    <property type="evidence" value="ECO:0007669"/>
    <property type="project" value="UniProtKB-UniRule"/>
</dbReference>
<dbReference type="GO" id="GO:0002161">
    <property type="term" value="F:aminoacyl-tRNA deacylase activity"/>
    <property type="evidence" value="ECO:0007669"/>
    <property type="project" value="TreeGrafter"/>
</dbReference>
<dbReference type="GO" id="GO:0005524">
    <property type="term" value="F:ATP binding"/>
    <property type="evidence" value="ECO:0007669"/>
    <property type="project" value="UniProtKB-UniRule"/>
</dbReference>
<dbReference type="GO" id="GO:0140096">
    <property type="term" value="F:catalytic activity, acting on a protein"/>
    <property type="evidence" value="ECO:0007669"/>
    <property type="project" value="UniProtKB-ARBA"/>
</dbReference>
<dbReference type="GO" id="GO:0016740">
    <property type="term" value="F:transferase activity"/>
    <property type="evidence" value="ECO:0007669"/>
    <property type="project" value="UniProtKB-ARBA"/>
</dbReference>
<dbReference type="GO" id="GO:0000049">
    <property type="term" value="F:tRNA binding"/>
    <property type="evidence" value="ECO:0007669"/>
    <property type="project" value="UniProtKB-KW"/>
</dbReference>
<dbReference type="GO" id="GO:0008270">
    <property type="term" value="F:zinc ion binding"/>
    <property type="evidence" value="ECO:0007669"/>
    <property type="project" value="UniProtKB-UniRule"/>
</dbReference>
<dbReference type="GO" id="GO:0006419">
    <property type="term" value="P:alanyl-tRNA aminoacylation"/>
    <property type="evidence" value="ECO:0007669"/>
    <property type="project" value="UniProtKB-UniRule"/>
</dbReference>
<dbReference type="CDD" id="cd00673">
    <property type="entry name" value="AlaRS_core"/>
    <property type="match status" value="1"/>
</dbReference>
<dbReference type="FunFam" id="2.40.30.130:FF:000001">
    <property type="entry name" value="Alanine--tRNA ligase"/>
    <property type="match status" value="1"/>
</dbReference>
<dbReference type="FunFam" id="3.30.54.20:FF:000001">
    <property type="entry name" value="Alanine--tRNA ligase"/>
    <property type="match status" value="1"/>
</dbReference>
<dbReference type="FunFam" id="3.30.930.10:FF:000046">
    <property type="entry name" value="Alanine--tRNA ligase"/>
    <property type="match status" value="1"/>
</dbReference>
<dbReference type="FunFam" id="3.30.980.10:FF:000004">
    <property type="entry name" value="Alanine--tRNA ligase, cytoplasmic"/>
    <property type="match status" value="1"/>
</dbReference>
<dbReference type="Gene3D" id="2.40.30.130">
    <property type="match status" value="1"/>
</dbReference>
<dbReference type="Gene3D" id="3.10.310.40">
    <property type="match status" value="1"/>
</dbReference>
<dbReference type="Gene3D" id="3.30.54.20">
    <property type="match status" value="1"/>
</dbReference>
<dbReference type="Gene3D" id="6.10.250.550">
    <property type="match status" value="1"/>
</dbReference>
<dbReference type="Gene3D" id="3.30.930.10">
    <property type="entry name" value="Bira Bifunctional Protein, Domain 2"/>
    <property type="match status" value="1"/>
</dbReference>
<dbReference type="Gene3D" id="3.30.980.10">
    <property type="entry name" value="Threonyl-trna Synthetase, Chain A, domain 2"/>
    <property type="match status" value="1"/>
</dbReference>
<dbReference type="HAMAP" id="MF_00036_B">
    <property type="entry name" value="Ala_tRNA_synth_B"/>
    <property type="match status" value="1"/>
</dbReference>
<dbReference type="InterPro" id="IPR045864">
    <property type="entry name" value="aa-tRNA-synth_II/BPL/LPL"/>
</dbReference>
<dbReference type="InterPro" id="IPR002318">
    <property type="entry name" value="Ala-tRNA-lgiase_IIc"/>
</dbReference>
<dbReference type="InterPro" id="IPR018162">
    <property type="entry name" value="Ala-tRNA-ligase_IIc_anticod-bd"/>
</dbReference>
<dbReference type="InterPro" id="IPR018165">
    <property type="entry name" value="Ala-tRNA-synth_IIc_core"/>
</dbReference>
<dbReference type="InterPro" id="IPR018164">
    <property type="entry name" value="Ala-tRNA-synth_IIc_N"/>
</dbReference>
<dbReference type="InterPro" id="IPR050058">
    <property type="entry name" value="Ala-tRNA_ligase"/>
</dbReference>
<dbReference type="InterPro" id="IPR023033">
    <property type="entry name" value="Ala_tRNA_ligase_euk/bac"/>
</dbReference>
<dbReference type="InterPro" id="IPR018163">
    <property type="entry name" value="Thr/Ala-tRNA-synth_IIc_edit"/>
</dbReference>
<dbReference type="InterPro" id="IPR009000">
    <property type="entry name" value="Transl_B-barrel_sf"/>
</dbReference>
<dbReference type="InterPro" id="IPR012947">
    <property type="entry name" value="tRNA_SAD"/>
</dbReference>
<dbReference type="NCBIfam" id="TIGR00344">
    <property type="entry name" value="alaS"/>
    <property type="match status" value="1"/>
</dbReference>
<dbReference type="PANTHER" id="PTHR11777:SF9">
    <property type="entry name" value="ALANINE--TRNA LIGASE, CYTOPLASMIC"/>
    <property type="match status" value="1"/>
</dbReference>
<dbReference type="PANTHER" id="PTHR11777">
    <property type="entry name" value="ALANYL-TRNA SYNTHETASE"/>
    <property type="match status" value="1"/>
</dbReference>
<dbReference type="Pfam" id="PF01411">
    <property type="entry name" value="tRNA-synt_2c"/>
    <property type="match status" value="1"/>
</dbReference>
<dbReference type="Pfam" id="PF07973">
    <property type="entry name" value="tRNA_SAD"/>
    <property type="match status" value="1"/>
</dbReference>
<dbReference type="PRINTS" id="PR00980">
    <property type="entry name" value="TRNASYNTHALA"/>
</dbReference>
<dbReference type="SMART" id="SM00863">
    <property type="entry name" value="tRNA_SAD"/>
    <property type="match status" value="1"/>
</dbReference>
<dbReference type="SUPFAM" id="SSF55681">
    <property type="entry name" value="Class II aaRS and biotin synthetases"/>
    <property type="match status" value="1"/>
</dbReference>
<dbReference type="SUPFAM" id="SSF101353">
    <property type="entry name" value="Putative anticodon-binding domain of alanyl-tRNA synthetase (AlaRS)"/>
    <property type="match status" value="1"/>
</dbReference>
<dbReference type="SUPFAM" id="SSF55186">
    <property type="entry name" value="ThrRS/AlaRS common domain"/>
    <property type="match status" value="1"/>
</dbReference>
<dbReference type="SUPFAM" id="SSF50447">
    <property type="entry name" value="Translation proteins"/>
    <property type="match status" value="1"/>
</dbReference>
<dbReference type="PROSITE" id="PS50860">
    <property type="entry name" value="AA_TRNA_LIGASE_II_ALA"/>
    <property type="match status" value="1"/>
</dbReference>
<reference key="1">
    <citation type="journal article" date="2008" name="J. Bacteriol.">
        <title>Complete genome sequence of the mosquitocidal bacterium Bacillus sphaericus C3-41 and comparison with those of closely related Bacillus species.</title>
        <authorList>
            <person name="Hu X."/>
            <person name="Fan W."/>
            <person name="Han B."/>
            <person name="Liu H."/>
            <person name="Zheng D."/>
            <person name="Li Q."/>
            <person name="Dong W."/>
            <person name="Yan J."/>
            <person name="Gao M."/>
            <person name="Berry C."/>
            <person name="Yuan Z."/>
        </authorList>
    </citation>
    <scope>NUCLEOTIDE SEQUENCE [LARGE SCALE GENOMIC DNA]</scope>
    <source>
        <strain>C3-41</strain>
    </source>
</reference>
<feature type="chain" id="PRO_0000347663" description="Alanine--tRNA ligase">
    <location>
        <begin position="1"/>
        <end position="908"/>
    </location>
</feature>
<feature type="binding site" evidence="1">
    <location>
        <position position="596"/>
    </location>
    <ligand>
        <name>Zn(2+)</name>
        <dbReference type="ChEBI" id="CHEBI:29105"/>
    </ligand>
</feature>
<feature type="binding site" evidence="1">
    <location>
        <position position="600"/>
    </location>
    <ligand>
        <name>Zn(2+)</name>
        <dbReference type="ChEBI" id="CHEBI:29105"/>
    </ligand>
</feature>
<feature type="binding site" evidence="1">
    <location>
        <position position="698"/>
    </location>
    <ligand>
        <name>Zn(2+)</name>
        <dbReference type="ChEBI" id="CHEBI:29105"/>
    </ligand>
</feature>
<feature type="binding site" evidence="1">
    <location>
        <position position="702"/>
    </location>
    <ligand>
        <name>Zn(2+)</name>
        <dbReference type="ChEBI" id="CHEBI:29105"/>
    </ligand>
</feature>
<keyword id="KW-0030">Aminoacyl-tRNA synthetase</keyword>
<keyword id="KW-0067">ATP-binding</keyword>
<keyword id="KW-0963">Cytoplasm</keyword>
<keyword id="KW-0436">Ligase</keyword>
<keyword id="KW-0479">Metal-binding</keyword>
<keyword id="KW-0547">Nucleotide-binding</keyword>
<keyword id="KW-0648">Protein biosynthesis</keyword>
<keyword id="KW-0694">RNA-binding</keyword>
<keyword id="KW-0820">tRNA-binding</keyword>
<keyword id="KW-0862">Zinc</keyword>
<name>SYA_LYSSC</name>
<comment type="function">
    <text evidence="1">Catalyzes the attachment of alanine to tRNA(Ala) in a two-step reaction: alanine is first activated by ATP to form Ala-AMP and then transferred to the acceptor end of tRNA(Ala). Also edits incorrectly charged Ser-tRNA(Ala) and Gly-tRNA(Ala) via its editing domain.</text>
</comment>
<comment type="catalytic activity">
    <reaction evidence="1">
        <text>tRNA(Ala) + L-alanine + ATP = L-alanyl-tRNA(Ala) + AMP + diphosphate</text>
        <dbReference type="Rhea" id="RHEA:12540"/>
        <dbReference type="Rhea" id="RHEA-COMP:9657"/>
        <dbReference type="Rhea" id="RHEA-COMP:9923"/>
        <dbReference type="ChEBI" id="CHEBI:30616"/>
        <dbReference type="ChEBI" id="CHEBI:33019"/>
        <dbReference type="ChEBI" id="CHEBI:57972"/>
        <dbReference type="ChEBI" id="CHEBI:78442"/>
        <dbReference type="ChEBI" id="CHEBI:78497"/>
        <dbReference type="ChEBI" id="CHEBI:456215"/>
        <dbReference type="EC" id="6.1.1.7"/>
    </reaction>
</comment>
<comment type="cofactor">
    <cofactor evidence="1">
        <name>Zn(2+)</name>
        <dbReference type="ChEBI" id="CHEBI:29105"/>
    </cofactor>
    <text evidence="1">Binds 1 zinc ion per subunit.</text>
</comment>
<comment type="subcellular location">
    <subcellularLocation>
        <location evidence="1">Cytoplasm</location>
    </subcellularLocation>
</comment>
<comment type="domain">
    <text evidence="1">Consists of three domains; the N-terminal catalytic domain, the editing domain and the C-terminal C-Ala domain. The editing domain removes incorrectly charged amino acids, while the C-Ala domain, along with tRNA(Ala), serves as a bridge to cooperatively bring together the editing and aminoacylation centers thus stimulating deacylation of misacylated tRNAs.</text>
</comment>
<comment type="similarity">
    <text evidence="1">Belongs to the class-II aminoacyl-tRNA synthetase family.</text>
</comment>
<comment type="sequence caution" evidence="2">
    <conflict type="frameshift">
        <sequence resource="EMBL-CDS" id="ACA41349"/>
    </conflict>
</comment>
<organism>
    <name type="scientific">Lysinibacillus sphaericus (strain C3-41)</name>
    <dbReference type="NCBI Taxonomy" id="444177"/>
    <lineage>
        <taxon>Bacteria</taxon>
        <taxon>Bacillati</taxon>
        <taxon>Bacillota</taxon>
        <taxon>Bacilli</taxon>
        <taxon>Bacillales</taxon>
        <taxon>Bacillaceae</taxon>
        <taxon>Lysinibacillus</taxon>
    </lineage>
</organism>
<protein>
    <recommendedName>
        <fullName evidence="1">Alanine--tRNA ligase</fullName>
        <ecNumber evidence="1">6.1.1.7</ecNumber>
    </recommendedName>
    <alternativeName>
        <fullName evidence="1">Alanyl-tRNA synthetase</fullName>
        <shortName evidence="1">AlaRS</shortName>
    </alternativeName>
</protein>
<proteinExistence type="inferred from homology"/>
<sequence length="908" mass="102334">MGRQGLIHIVILQYKLGGIYPMKAVDIRQMYLEFFKEKGHHHEPSAPLVPINDPSLLWINSGVATLKPYFDGRVIPDNPRITNAQKSIRTNDIENVGKTARHHTFFEMLGNFSIGDYFKKEAIHYAWEFLTDKKWMGFDPELLSITIHPEDQEAYDVWHQEIGIPEERLIRLEGNFWDIGEGPSGPNSEIFYDRGVEYGSDENDPEMYPGGENERYLEIWNLVFSQFNHNPDGTYTPLPKQNIDTGMGLERIVSVVQNVPTNFDTDLFMPIIEKIEEFANRKYKRPSEVDLNEIFGSEEDINTPFKVIADHIRTVAFAIGDGALPSNEGRGYVLRRLLRRAVRYAKQIGIEKPFMFELVPTVGKIMEDFYPEVTEKCEFIQRVIKNEEIRFHETLDGGLAIFNEVAESQKAAGHDFIPGADAFRLYDTYGFPIELTEEYAEEVGMKVDHEGFETAMEEQRERARAARQDVDSMQVQNEVLANLTVASEFVGFDTLVANTEIAAMIVNGQVEKVASEGQEALVILAKTPFYAEMGGQIADSGIISNDSFTAVVKDVQKAPNGQPLHTVIVESGEMHVEDAVQAIVHRDDRNLIIKNHTATHIMQRALKDVLGDHVNQAGSYVGPDRLRFDFSHFGQVTKEELQQIERIVNEKVWDDIEVVIEEMAIDQAKAKGAMALFGEKYGDVVRVVSIGDYSIELCGGIHVKRSSEIGFFKIVSEGGIGAGTRRIEAVTGKVAYEVVKEEEALLNDAAALLKANPKDIVTKVQALQGDYKELQRDNEALSQKIANAHSWGNCRCSTNNWRCHSSFYKSRSKDNNLLRQMMDDLKALMPKAVIVLGAVDGDLSDAMCRGITIINRWQLPCWKYREIWCQKLVVVIGGVRPDMAMAGAKDASKLDEALLSVYDYVKSI</sequence>